<protein>
    <recommendedName>
        <fullName>Multidrug resistance efflux pump SepA</fullName>
    </recommendedName>
    <alternativeName>
        <fullName>Antiseptic resistance protein SepA</fullName>
    </alternativeName>
    <alternativeName>
        <fullName>Staphylococcal efflux pump A</fullName>
    </alternativeName>
</protein>
<comment type="function">
    <text evidence="1">Involved in multidrug efflux.</text>
</comment>
<comment type="subcellular location">
    <subcellularLocation>
        <location evidence="3">Cell membrane</location>
        <topology evidence="3">Multi-pass membrane protein</topology>
    </subcellularLocation>
</comment>
<comment type="similarity">
    <text evidence="3">Belongs to the multidrug resistance efflux pump SepA family.</text>
</comment>
<gene>
    <name type="primary">sepA</name>
    <name type="ordered locus">SSP0719</name>
</gene>
<keyword id="KW-1003">Cell membrane</keyword>
<keyword id="KW-0472">Membrane</keyword>
<keyword id="KW-1185">Reference proteome</keyword>
<keyword id="KW-0812">Transmembrane</keyword>
<keyword id="KW-1133">Transmembrane helix</keyword>
<keyword id="KW-0813">Transport</keyword>
<sequence>MKYLRYLLTTLIVLSVFIISGAIFLTFLGFGLYGLSRILIYFHLAYFGYNKSFYDNLIYYGSYIVLGYFNLFIVENLMDYFRKKLPENLYFQGLTFQLITFSVTTLLFYFIVHIHYTYIDIDFWVIVLIIGVLFICKEIFYPDSKNLNQKNK</sequence>
<evidence type="ECO:0000250" key="1"/>
<evidence type="ECO:0000255" key="2"/>
<evidence type="ECO:0000305" key="3"/>
<reference key="1">
    <citation type="journal article" date="2005" name="Proc. Natl. Acad. Sci. U.S.A.">
        <title>Whole genome sequence of Staphylococcus saprophyticus reveals the pathogenesis of uncomplicated urinary tract infection.</title>
        <authorList>
            <person name="Kuroda M."/>
            <person name="Yamashita A."/>
            <person name="Hirakawa H."/>
            <person name="Kumano M."/>
            <person name="Morikawa K."/>
            <person name="Higashide M."/>
            <person name="Maruyama A."/>
            <person name="Inose Y."/>
            <person name="Matoba K."/>
            <person name="Toh H."/>
            <person name="Kuhara S."/>
            <person name="Hattori M."/>
            <person name="Ohta T."/>
        </authorList>
    </citation>
    <scope>NUCLEOTIDE SEQUENCE [LARGE SCALE GENOMIC DNA]</scope>
    <source>
        <strain>ATCC 15305 / DSM 20229 / NCIMB 8711 / NCTC 7292 / S-41</strain>
    </source>
</reference>
<dbReference type="EMBL" id="AP008934">
    <property type="protein sequence ID" value="BAE17864.1"/>
    <property type="molecule type" value="Genomic_DNA"/>
</dbReference>
<dbReference type="RefSeq" id="WP_011302632.1">
    <property type="nucleotide sequence ID" value="NZ_MTGA01000036.1"/>
</dbReference>
<dbReference type="SMR" id="Q49ZB2"/>
<dbReference type="GeneID" id="3615920"/>
<dbReference type="KEGG" id="ssp:SSP0719"/>
<dbReference type="PATRIC" id="fig|342451.11.peg.721"/>
<dbReference type="eggNOG" id="ENOG5033YVE">
    <property type="taxonomic scope" value="Bacteria"/>
</dbReference>
<dbReference type="HOGENOM" id="CLU_151983_0_0_9"/>
<dbReference type="OrthoDB" id="2417783at2"/>
<dbReference type="Proteomes" id="UP000006371">
    <property type="component" value="Chromosome"/>
</dbReference>
<dbReference type="GO" id="GO:0005886">
    <property type="term" value="C:plasma membrane"/>
    <property type="evidence" value="ECO:0007669"/>
    <property type="project" value="UniProtKB-SubCell"/>
</dbReference>
<dbReference type="InterPro" id="IPR031396">
    <property type="entry name" value="SepA"/>
</dbReference>
<dbReference type="Pfam" id="PF17080">
    <property type="entry name" value="SepA"/>
    <property type="match status" value="1"/>
</dbReference>
<organism>
    <name type="scientific">Staphylococcus saprophyticus subsp. saprophyticus (strain ATCC 15305 / DSM 20229 / NCIMB 8711 / NCTC 7292 / S-41)</name>
    <dbReference type="NCBI Taxonomy" id="342451"/>
    <lineage>
        <taxon>Bacteria</taxon>
        <taxon>Bacillati</taxon>
        <taxon>Bacillota</taxon>
        <taxon>Bacilli</taxon>
        <taxon>Bacillales</taxon>
        <taxon>Staphylococcaceae</taxon>
        <taxon>Staphylococcus</taxon>
    </lineage>
</organism>
<accession>Q49ZB2</accession>
<feature type="chain" id="PRO_0000351498" description="Multidrug resistance efflux pump SepA">
    <location>
        <begin position="1"/>
        <end position="152"/>
    </location>
</feature>
<feature type="transmembrane region" description="Helical" evidence="2">
    <location>
        <begin position="11"/>
        <end position="31"/>
    </location>
</feature>
<feature type="transmembrane region" description="Helical" evidence="2">
    <location>
        <begin position="57"/>
        <end position="77"/>
    </location>
</feature>
<feature type="transmembrane region" description="Helical" evidence="2">
    <location>
        <begin position="94"/>
        <end position="114"/>
    </location>
</feature>
<feature type="transmembrane region" description="Helical" evidence="2">
    <location>
        <begin position="116"/>
        <end position="136"/>
    </location>
</feature>
<proteinExistence type="inferred from homology"/>
<name>MDEP_STAS1</name>